<accession>A3CLN6</accession>
<name>MURG_STRSV</name>
<organism>
    <name type="scientific">Streptococcus sanguinis (strain SK36)</name>
    <dbReference type="NCBI Taxonomy" id="388919"/>
    <lineage>
        <taxon>Bacteria</taxon>
        <taxon>Bacillati</taxon>
        <taxon>Bacillota</taxon>
        <taxon>Bacilli</taxon>
        <taxon>Lactobacillales</taxon>
        <taxon>Streptococcaceae</taxon>
        <taxon>Streptococcus</taxon>
    </lineage>
</organism>
<sequence length="356" mass="39552">MKKIVFTGGGTVGHVTLNLLLIPKFIKEGWQVHYVGDKHGIEYQEIQKSGLDVTFHSVATGKLRRYFSWQNLLDGFKVVWGIFQSLGIMLKVRPQALFSKGGFVSVPPVIAARLSGVPVYVHESDLSIGLANKIAYKCATKMYATFEQPSSLNKIEHVGAVTKVGSQESVLPQELEEIRQYFDKELPTLLFVGGSAGAKVFNDFVSQNQAALTERYNVINLTGDASLDVLSERLFRRAYVTDLYQPLMDLADVVVTRGGSNTIFELLAMAKLHIIVPLGREASRGDQIENADYFVKKGYAKQLAEEQLDMSHLQAALDDLLANQASYHQAMKNSQEIKSVDEFYALLKADIDKGKK</sequence>
<gene>
    <name evidence="1" type="primary">murG</name>
    <name type="ordered locus">SSA_0653</name>
</gene>
<feature type="chain" id="PRO_0000315182" description="UDP-N-acetylglucosamine--N-acetylmuramyl-(pentapeptide) pyrophosphoryl-undecaprenol N-acetylglucosamine transferase">
    <location>
        <begin position="1"/>
        <end position="356"/>
    </location>
</feature>
<feature type="binding site" evidence="1">
    <location>
        <position position="195"/>
    </location>
    <ligand>
        <name>UDP-N-acetyl-alpha-D-glucosamine</name>
        <dbReference type="ChEBI" id="CHEBI:57705"/>
    </ligand>
</feature>
<feature type="binding site" evidence="1">
    <location>
        <position position="287"/>
    </location>
    <ligand>
        <name>UDP-N-acetyl-alpha-D-glucosamine</name>
        <dbReference type="ChEBI" id="CHEBI:57705"/>
    </ligand>
</feature>
<comment type="function">
    <text evidence="1">Cell wall formation. Catalyzes the transfer of a GlcNAc subunit on undecaprenyl-pyrophosphoryl-MurNAc-pentapeptide (lipid intermediate I) to form undecaprenyl-pyrophosphoryl-MurNAc-(pentapeptide)GlcNAc (lipid intermediate II).</text>
</comment>
<comment type="catalytic activity">
    <reaction evidence="1">
        <text>Mur2Ac(oyl-L-Ala-gamma-D-Glu-L-Lys-D-Ala-D-Ala)-di-trans,octa-cis-undecaprenyl diphosphate + UDP-N-acetyl-alpha-D-glucosamine = beta-D-GlcNAc-(1-&gt;4)-Mur2Ac(oyl-L-Ala-gamma-D-Glu-L-Lys-D-Ala-D-Ala)-di-trans,octa-cis-undecaprenyl diphosphate + UDP + H(+)</text>
        <dbReference type="Rhea" id="RHEA:23192"/>
        <dbReference type="ChEBI" id="CHEBI:15378"/>
        <dbReference type="ChEBI" id="CHEBI:57705"/>
        <dbReference type="ChEBI" id="CHEBI:58223"/>
        <dbReference type="ChEBI" id="CHEBI:60032"/>
        <dbReference type="ChEBI" id="CHEBI:60033"/>
        <dbReference type="EC" id="2.4.1.227"/>
    </reaction>
</comment>
<comment type="pathway">
    <text evidence="1">Cell wall biogenesis; peptidoglycan biosynthesis.</text>
</comment>
<comment type="subcellular location">
    <subcellularLocation>
        <location evidence="1">Cell membrane</location>
        <topology evidence="1">Peripheral membrane protein</topology>
        <orientation evidence="1">Cytoplasmic side</orientation>
    </subcellularLocation>
</comment>
<comment type="similarity">
    <text evidence="1">Belongs to the glycosyltransferase 28 family. MurG subfamily.</text>
</comment>
<keyword id="KW-0131">Cell cycle</keyword>
<keyword id="KW-0132">Cell division</keyword>
<keyword id="KW-1003">Cell membrane</keyword>
<keyword id="KW-0133">Cell shape</keyword>
<keyword id="KW-0961">Cell wall biogenesis/degradation</keyword>
<keyword id="KW-0328">Glycosyltransferase</keyword>
<keyword id="KW-0472">Membrane</keyword>
<keyword id="KW-0573">Peptidoglycan synthesis</keyword>
<keyword id="KW-1185">Reference proteome</keyword>
<keyword id="KW-0808">Transferase</keyword>
<evidence type="ECO:0000255" key="1">
    <source>
        <dbReference type="HAMAP-Rule" id="MF_00033"/>
    </source>
</evidence>
<reference key="1">
    <citation type="journal article" date="2007" name="J. Bacteriol.">
        <title>Genome of the opportunistic pathogen Streptococcus sanguinis.</title>
        <authorList>
            <person name="Xu P."/>
            <person name="Alves J.M."/>
            <person name="Kitten T."/>
            <person name="Brown A."/>
            <person name="Chen Z."/>
            <person name="Ozaki L.S."/>
            <person name="Manque P."/>
            <person name="Ge X."/>
            <person name="Serrano M.G."/>
            <person name="Puiu D."/>
            <person name="Hendricks S."/>
            <person name="Wang Y."/>
            <person name="Chaplin M.D."/>
            <person name="Akan D."/>
            <person name="Paik S."/>
            <person name="Peterson D.L."/>
            <person name="Macrina F.L."/>
            <person name="Buck G.A."/>
        </authorList>
    </citation>
    <scope>NUCLEOTIDE SEQUENCE [LARGE SCALE GENOMIC DNA]</scope>
    <source>
        <strain>SK36</strain>
    </source>
</reference>
<dbReference type="EC" id="2.4.1.227" evidence="1"/>
<dbReference type="EMBL" id="CP000387">
    <property type="protein sequence ID" value="ABN44091.1"/>
    <property type="molecule type" value="Genomic_DNA"/>
</dbReference>
<dbReference type="RefSeq" id="WP_011836646.1">
    <property type="nucleotide sequence ID" value="NC_009009.1"/>
</dbReference>
<dbReference type="RefSeq" id="YP_001034641.1">
    <property type="nucleotide sequence ID" value="NC_009009.1"/>
</dbReference>
<dbReference type="SMR" id="A3CLN6"/>
<dbReference type="STRING" id="388919.SSA_0653"/>
<dbReference type="CAZy" id="GT28">
    <property type="family name" value="Glycosyltransferase Family 28"/>
</dbReference>
<dbReference type="KEGG" id="ssa:SSA_0653"/>
<dbReference type="PATRIC" id="fig|388919.9.peg.627"/>
<dbReference type="eggNOG" id="COG0707">
    <property type="taxonomic scope" value="Bacteria"/>
</dbReference>
<dbReference type="HOGENOM" id="CLU_037404_0_0_9"/>
<dbReference type="OrthoDB" id="9808936at2"/>
<dbReference type="UniPathway" id="UPA00219"/>
<dbReference type="Proteomes" id="UP000002148">
    <property type="component" value="Chromosome"/>
</dbReference>
<dbReference type="GO" id="GO:0005886">
    <property type="term" value="C:plasma membrane"/>
    <property type="evidence" value="ECO:0007669"/>
    <property type="project" value="UniProtKB-SubCell"/>
</dbReference>
<dbReference type="GO" id="GO:0050511">
    <property type="term" value="F:undecaprenyldiphospho-muramoylpentapeptide beta-N-acetylglucosaminyltransferase activity"/>
    <property type="evidence" value="ECO:0007669"/>
    <property type="project" value="UniProtKB-UniRule"/>
</dbReference>
<dbReference type="GO" id="GO:0005975">
    <property type="term" value="P:carbohydrate metabolic process"/>
    <property type="evidence" value="ECO:0007669"/>
    <property type="project" value="InterPro"/>
</dbReference>
<dbReference type="GO" id="GO:0051301">
    <property type="term" value="P:cell division"/>
    <property type="evidence" value="ECO:0007669"/>
    <property type="project" value="UniProtKB-KW"/>
</dbReference>
<dbReference type="GO" id="GO:0071555">
    <property type="term" value="P:cell wall organization"/>
    <property type="evidence" value="ECO:0007669"/>
    <property type="project" value="UniProtKB-KW"/>
</dbReference>
<dbReference type="GO" id="GO:0030259">
    <property type="term" value="P:lipid glycosylation"/>
    <property type="evidence" value="ECO:0007669"/>
    <property type="project" value="UniProtKB-UniRule"/>
</dbReference>
<dbReference type="GO" id="GO:0009252">
    <property type="term" value="P:peptidoglycan biosynthetic process"/>
    <property type="evidence" value="ECO:0007669"/>
    <property type="project" value="UniProtKB-UniRule"/>
</dbReference>
<dbReference type="GO" id="GO:0008360">
    <property type="term" value="P:regulation of cell shape"/>
    <property type="evidence" value="ECO:0007669"/>
    <property type="project" value="UniProtKB-KW"/>
</dbReference>
<dbReference type="CDD" id="cd03785">
    <property type="entry name" value="GT28_MurG"/>
    <property type="match status" value="1"/>
</dbReference>
<dbReference type="Gene3D" id="3.40.50.2000">
    <property type="entry name" value="Glycogen Phosphorylase B"/>
    <property type="match status" value="2"/>
</dbReference>
<dbReference type="HAMAP" id="MF_00033">
    <property type="entry name" value="MurG"/>
    <property type="match status" value="1"/>
</dbReference>
<dbReference type="InterPro" id="IPR006009">
    <property type="entry name" value="GlcNAc_MurG"/>
</dbReference>
<dbReference type="InterPro" id="IPR007235">
    <property type="entry name" value="Glyco_trans_28_C"/>
</dbReference>
<dbReference type="InterPro" id="IPR004276">
    <property type="entry name" value="GlycoTrans_28_N"/>
</dbReference>
<dbReference type="PANTHER" id="PTHR21015:SF27">
    <property type="entry name" value="UDP-N-ACETYLGLUCOSAMINE--N-ACETYLMURAMYL-(PENTAPEPTIDE) PYROPHOSPHORYL-UNDECAPRENOL N-ACETYLGLUCOSAMINE TRANSFERASE"/>
    <property type="match status" value="1"/>
</dbReference>
<dbReference type="PANTHER" id="PTHR21015">
    <property type="entry name" value="UDP-N-ACETYLGLUCOSAMINE--N-ACETYLMURAMYL-(PENTAPEPTIDE) PYROPHOSPHORYL-UNDECAPRENOL N-ACETYLGLUCOSAMINE TRANSFERASE 1"/>
    <property type="match status" value="1"/>
</dbReference>
<dbReference type="Pfam" id="PF04101">
    <property type="entry name" value="Glyco_tran_28_C"/>
    <property type="match status" value="1"/>
</dbReference>
<dbReference type="Pfam" id="PF03033">
    <property type="entry name" value="Glyco_transf_28"/>
    <property type="match status" value="1"/>
</dbReference>
<dbReference type="SUPFAM" id="SSF53756">
    <property type="entry name" value="UDP-Glycosyltransferase/glycogen phosphorylase"/>
    <property type="match status" value="1"/>
</dbReference>
<proteinExistence type="inferred from homology"/>
<protein>
    <recommendedName>
        <fullName evidence="1">UDP-N-acetylglucosamine--N-acetylmuramyl-(pentapeptide) pyrophosphoryl-undecaprenol N-acetylglucosamine transferase</fullName>
        <ecNumber evidence="1">2.4.1.227</ecNumber>
    </recommendedName>
    <alternativeName>
        <fullName evidence="1">Undecaprenyl-PP-MurNAc-pentapeptide-UDPGlcNAc GlcNAc transferase</fullName>
    </alternativeName>
</protein>